<accession>Q5R893</accession>
<feature type="initiator methionine" description="Removed" evidence="2">
    <location>
        <position position="1"/>
    </location>
</feature>
<feature type="chain" id="PRO_0000244840" description="Histone H2B type 1">
    <location>
        <begin position="2"/>
        <end position="126"/>
    </location>
</feature>
<feature type="region of interest" description="Disordered" evidence="13">
    <location>
        <begin position="1"/>
        <end position="36"/>
    </location>
</feature>
<feature type="compositionally biased region" description="Low complexity" evidence="13">
    <location>
        <begin position="1"/>
        <end position="12"/>
    </location>
</feature>
<feature type="modified residue" description="N-acetylproline" evidence="2">
    <location>
        <position position="2"/>
    </location>
</feature>
<feature type="modified residue" description="ADP-ribosyl glutamic acid" evidence="3">
    <location>
        <position position="3"/>
    </location>
</feature>
<feature type="modified residue" description="N6-(2-hydroxyisobutyryl)lysine; alternate" evidence="3">
    <location>
        <position position="6"/>
    </location>
</feature>
<feature type="modified residue" description="N6-(beta-hydroxybutyryl)lysine; alternate" evidence="10">
    <location>
        <position position="6"/>
    </location>
</feature>
<feature type="modified residue" description="N6-acetyllysine; alternate" evidence="7">
    <location>
        <position position="6"/>
    </location>
</feature>
<feature type="modified residue" description="N6-butyryllysine; alternate" evidence="3">
    <location>
        <position position="6"/>
    </location>
</feature>
<feature type="modified residue" description="N6-crotonyllysine; alternate" evidence="3">
    <location>
        <position position="6"/>
    </location>
</feature>
<feature type="modified residue" description="N6-lactoyllysine; alternate" evidence="3">
    <location>
        <position position="6"/>
    </location>
</feature>
<feature type="modified residue" description="ADP-ribosylserine" evidence="3">
    <location>
        <position position="7"/>
    </location>
</feature>
<feature type="modified residue" description="N6-(beta-hydroxybutyryl)lysine; alternate" evidence="10">
    <location>
        <position position="12"/>
    </location>
</feature>
<feature type="modified residue" description="N6-acetyllysine; alternate" evidence="5">
    <location>
        <position position="12"/>
    </location>
</feature>
<feature type="modified residue" description="N6-crotonyllysine; alternate" evidence="3">
    <location>
        <position position="12"/>
    </location>
</feature>
<feature type="modified residue" description="N6-lactoyllysine; alternate" evidence="3">
    <location>
        <position position="12"/>
    </location>
</feature>
<feature type="modified residue" description="N6-(2-hydroxyisobutyryl)lysine; alternate" evidence="3">
    <location>
        <position position="13"/>
    </location>
</feature>
<feature type="modified residue" description="N6-acetyllysine; alternate" evidence="7">
    <location>
        <position position="13"/>
    </location>
</feature>
<feature type="modified residue" description="N6-crotonyllysine; alternate" evidence="3">
    <location>
        <position position="13"/>
    </location>
</feature>
<feature type="modified residue" description="Phosphoserine; by STK4/MST1" evidence="3">
    <location>
        <position position="15"/>
    </location>
</feature>
<feature type="modified residue" description="N6-acetyllysine; alternate" evidence="7">
    <location>
        <position position="16"/>
    </location>
</feature>
<feature type="modified residue" description="N6-crotonyllysine; alternate" evidence="3">
    <location>
        <position position="16"/>
    </location>
</feature>
<feature type="modified residue" description="N6-lactoyllysine; alternate" evidence="3">
    <location>
        <position position="16"/>
    </location>
</feature>
<feature type="modified residue" description="N6-acetyllysine; alternate" evidence="3">
    <location>
        <position position="17"/>
    </location>
</feature>
<feature type="modified residue" description="N6-crotonyllysine; alternate" evidence="3">
    <location>
        <position position="17"/>
    </location>
</feature>
<feature type="modified residue" description="N6-glutaryllysine; alternate" evidence="3">
    <location>
        <position position="17"/>
    </location>
</feature>
<feature type="modified residue" description="N6-lactoyllysine; alternate" evidence="3">
    <location>
        <position position="17"/>
    </location>
</feature>
<feature type="modified residue" description="N6-(2-hydroxyisobutyryl)lysine; alternate" evidence="3">
    <location>
        <position position="21"/>
    </location>
</feature>
<feature type="modified residue" description="N6-(beta-hydroxybutyryl)lysine; alternate" evidence="10">
    <location>
        <position position="21"/>
    </location>
</feature>
<feature type="modified residue" description="N6-acetyllysine; alternate" evidence="7">
    <location>
        <position position="21"/>
    </location>
</feature>
<feature type="modified residue" description="N6-butyryllysine; alternate" evidence="3">
    <location>
        <position position="21"/>
    </location>
</feature>
<feature type="modified residue" description="N6-crotonyllysine; alternate" evidence="3">
    <location>
        <position position="21"/>
    </location>
</feature>
<feature type="modified residue" description="N6-lactoyllysine; alternate" evidence="3">
    <location>
        <position position="21"/>
    </location>
</feature>
<feature type="modified residue" description="N6-(2-hydroxyisobutyryl)lysine; alternate" evidence="3">
    <location>
        <position position="24"/>
    </location>
</feature>
<feature type="modified residue" description="N6-acetyllysine; alternate" evidence="3">
    <location>
        <position position="24"/>
    </location>
</feature>
<feature type="modified residue" description="N6-crotonyllysine; alternate" evidence="3">
    <location>
        <position position="24"/>
    </location>
</feature>
<feature type="modified residue" description="N6-lactoyllysine; alternate" evidence="3">
    <location>
        <position position="24"/>
    </location>
</feature>
<feature type="modified residue" description="N6-(2-hydroxyisobutyryl)lysine" evidence="3">
    <location>
        <position position="25"/>
    </location>
</feature>
<feature type="modified residue" description="N6-(2-hydroxyisobutyryl)lysine; alternate" evidence="3">
    <location>
        <position position="35"/>
    </location>
</feature>
<feature type="modified residue" description="N6-(beta-hydroxybutyryl)lysine; alternate" evidence="10">
    <location>
        <position position="35"/>
    </location>
</feature>
<feature type="modified residue" description="N6-crotonyllysine; alternate" evidence="3">
    <location>
        <position position="35"/>
    </location>
</feature>
<feature type="modified residue" description="N6-glutaryllysine; alternate" evidence="3">
    <location>
        <position position="35"/>
    </location>
</feature>
<feature type="modified residue" description="N6-succinyllysine; alternate" evidence="3">
    <location>
        <position position="35"/>
    </location>
</feature>
<feature type="modified residue" description="PolyADP-ribosyl glutamic acid" evidence="10">
    <location>
        <position position="36"/>
    </location>
</feature>
<feature type="modified residue" description="Phosphoserine; by AMPK" evidence="10">
    <location>
        <position position="37"/>
    </location>
</feature>
<feature type="modified residue" description="N6-(2-hydroxyisobutyryl)lysine; alternate" evidence="3">
    <location>
        <position position="44"/>
    </location>
</feature>
<feature type="modified residue" description="N6-glutaryllysine; alternate" evidence="3">
    <location>
        <position position="44"/>
    </location>
</feature>
<feature type="modified residue" description="N6-lactoyllysine; alternate" evidence="3">
    <location>
        <position position="44"/>
    </location>
</feature>
<feature type="modified residue" description="N6-(2-hydroxyisobutyryl)lysine; alternate" evidence="3">
    <location>
        <position position="47"/>
    </location>
</feature>
<feature type="modified residue" description="N6-glutaryllysine; alternate" evidence="3">
    <location>
        <position position="47"/>
    </location>
</feature>
<feature type="modified residue" description="N6-methyllysine; alternate" evidence="5">
    <location>
        <position position="47"/>
    </location>
</feature>
<feature type="modified residue" description="N6,N6-dimethyllysine; alternate" evidence="5">
    <location>
        <position position="58"/>
    </location>
</feature>
<feature type="modified residue" description="N6-(2-hydroxyisobutyryl)lysine; alternate" evidence="3">
    <location>
        <position position="58"/>
    </location>
</feature>
<feature type="modified residue" description="Dimethylated arginine" evidence="12">
    <location>
        <position position="80"/>
    </location>
</feature>
<feature type="modified residue" description="N6,N6,N6-trimethyllysine; alternate" evidence="12">
    <location>
        <position position="86"/>
    </location>
</feature>
<feature type="modified residue" description="N6-(2-hydroxyisobutyryl)lysine; alternate" evidence="3">
    <location>
        <position position="86"/>
    </location>
</feature>
<feature type="modified residue" description="N6-acetyllysine; alternate" evidence="12">
    <location>
        <position position="86"/>
    </location>
</feature>
<feature type="modified residue" description="N6-lactoyllysine; alternate" evidence="3">
    <location>
        <position position="86"/>
    </location>
</feature>
<feature type="modified residue" description="Omega-N-methylarginine" evidence="12">
    <location>
        <position position="87"/>
    </location>
</feature>
<feature type="modified residue" description="Omega-N-methylarginine" evidence="12">
    <location>
        <position position="93"/>
    </location>
</feature>
<feature type="modified residue" description="N6-(2-hydroxyisobutyryl)lysine; alternate" evidence="3">
    <location>
        <position position="109"/>
    </location>
</feature>
<feature type="modified residue" description="N6-glutaryllysine; alternate" evidence="3">
    <location>
        <position position="109"/>
    </location>
</feature>
<feature type="modified residue" description="N6-lactoyllysine; alternate" evidence="3">
    <location>
        <position position="109"/>
    </location>
</feature>
<feature type="modified residue" description="N6-methyllysine; alternate" evidence="5">
    <location>
        <position position="109"/>
    </location>
</feature>
<feature type="modified residue" description="Phosphothreonine" evidence="8">
    <location>
        <position position="116"/>
    </location>
</feature>
<feature type="modified residue" description="N6-(2-hydroxyisobutyryl)lysine; alternate" evidence="3">
    <location>
        <position position="117"/>
    </location>
</feature>
<feature type="modified residue" description="N6-(beta-hydroxybutyryl)lysine; alternate" evidence="10">
    <location>
        <position position="117"/>
    </location>
</feature>
<feature type="modified residue" description="N6-glutaryllysine; alternate" evidence="3">
    <location>
        <position position="117"/>
    </location>
</feature>
<feature type="modified residue" description="N6-lactoyllysine; alternate" evidence="3">
    <location>
        <position position="117"/>
    </location>
</feature>
<feature type="modified residue" description="N6-methylated lysine; alternate" evidence="8">
    <location>
        <position position="117"/>
    </location>
</feature>
<feature type="modified residue" description="N6-succinyllysine; alternate" evidence="3">
    <location>
        <position position="117"/>
    </location>
</feature>
<feature type="modified residue" description="N6-(2-hydroxyisobutyryl)lysine; alternate" evidence="3">
    <location>
        <position position="121"/>
    </location>
</feature>
<feature type="modified residue" description="N6-glutaryllysine; alternate" evidence="3">
    <location>
        <position position="121"/>
    </location>
</feature>
<feature type="modified residue" description="N6-lactoyllysine; alternate" evidence="3">
    <location>
        <position position="121"/>
    </location>
</feature>
<feature type="modified residue" description="N6-succinyllysine; alternate" evidence="3">
    <location>
        <position position="121"/>
    </location>
</feature>
<feature type="glycosylation site" description="O-linked (GlcNAc) serine" evidence="5">
    <location>
        <position position="113"/>
    </location>
</feature>
<feature type="cross-link" description="Glycyl lysine isopeptide (Lys-Gly) (interchain with G-Cter in SUMO2); alternate" evidence="4">
    <location>
        <position position="6"/>
    </location>
</feature>
<feature type="cross-link" description="Glycyl lysine isopeptide (Lys-Gly) (interchain with G-Cter in SUMO2); alternate" evidence="9">
    <location>
        <position position="21"/>
    </location>
</feature>
<feature type="cross-link" description="Glycyl lysine isopeptide (Lys-Gly) (interchain with G-Cter in ubiquitin); alternate" evidence="3">
    <location>
        <position position="35"/>
    </location>
</feature>
<feature type="cross-link" description="Glycyl lysine isopeptide (Lys-Gly) (interchain with G-Cter in ubiquitin); alternate" evidence="6">
    <location>
        <position position="121"/>
    </location>
</feature>
<organism>
    <name type="scientific">Pongo abelii</name>
    <name type="common">Sumatran orangutan</name>
    <name type="synonym">Pongo pygmaeus abelii</name>
    <dbReference type="NCBI Taxonomy" id="9601"/>
    <lineage>
        <taxon>Eukaryota</taxon>
        <taxon>Metazoa</taxon>
        <taxon>Chordata</taxon>
        <taxon>Craniata</taxon>
        <taxon>Vertebrata</taxon>
        <taxon>Euteleostomi</taxon>
        <taxon>Mammalia</taxon>
        <taxon>Eutheria</taxon>
        <taxon>Euarchontoglires</taxon>
        <taxon>Primates</taxon>
        <taxon>Haplorrhini</taxon>
        <taxon>Catarrhini</taxon>
        <taxon>Hominidae</taxon>
        <taxon>Pongo</taxon>
    </lineage>
</organism>
<dbReference type="EMBL" id="CR859861">
    <property type="protein sequence ID" value="CAH92017.1"/>
    <property type="molecule type" value="mRNA"/>
</dbReference>
<dbReference type="RefSeq" id="NP_001126171.1">
    <property type="nucleotide sequence ID" value="NM_001132699.1"/>
</dbReference>
<dbReference type="RefSeq" id="XP_002816569.1">
    <property type="nucleotide sequence ID" value="XM_002816523.5"/>
</dbReference>
<dbReference type="RefSeq" id="XP_002816580.3">
    <property type="nucleotide sequence ID" value="XM_002816534.4"/>
</dbReference>
<dbReference type="RefSeq" id="XP_009239769.3">
    <property type="nucleotide sequence ID" value="XM_009241494.4"/>
</dbReference>
<dbReference type="RefSeq" id="XP_009239778.1">
    <property type="nucleotide sequence ID" value="XM_009241503.4"/>
</dbReference>
<dbReference type="RefSeq" id="XP_054412827.1">
    <property type="nucleotide sequence ID" value="XM_054556852.2"/>
</dbReference>
<dbReference type="SMR" id="Q5R893"/>
<dbReference type="FunCoup" id="Q5R893">
    <property type="interactions" value="2025"/>
</dbReference>
<dbReference type="STRING" id="9601.ENSPPYP00000018237"/>
<dbReference type="Ensembl" id="ENSPPYT00000018970.2">
    <property type="protein sequence ID" value="ENSPPYP00000045224.1"/>
    <property type="gene ID" value="ENSPPYG00000040005.1"/>
</dbReference>
<dbReference type="Ensembl" id="ENSPPYT00000018981.3">
    <property type="protein sequence ID" value="ENSPPYP00000018254.3"/>
    <property type="gene ID" value="ENSPPYG00000035259.1"/>
</dbReference>
<dbReference type="Ensembl" id="ENSPPYT00000046759.1">
    <property type="protein sequence ID" value="ENSPPYP00000029753.1"/>
    <property type="gene ID" value="ENSPPYG00000030771.1"/>
</dbReference>
<dbReference type="Ensembl" id="ENSPPYT00000054707.1">
    <property type="protein sequence ID" value="ENSPPYP00000041726.1"/>
    <property type="gene ID" value="ENSPPYG00000039639.1"/>
</dbReference>
<dbReference type="Ensembl" id="ENSPPYT00000056222.1">
    <property type="protein sequence ID" value="ENSPPYP00000032032.1"/>
    <property type="gene ID" value="ENSPPYG00000040407.1"/>
</dbReference>
<dbReference type="GeneID" id="100173133"/>
<dbReference type="GeneID" id="100439336"/>
<dbReference type="GeneID" id="100441051"/>
<dbReference type="GeneID" id="100442161"/>
<dbReference type="GeneID" id="100445948"/>
<dbReference type="KEGG" id="pon:100173133"/>
<dbReference type="KEGG" id="pon:100439336"/>
<dbReference type="KEGG" id="pon:100441051"/>
<dbReference type="KEGG" id="pon:100442161"/>
<dbReference type="KEGG" id="pon:100445948"/>
<dbReference type="CTD" id="680403"/>
<dbReference type="eggNOG" id="KOG1744">
    <property type="taxonomic scope" value="Eukaryota"/>
</dbReference>
<dbReference type="GeneTree" id="ENSGT01110000267152"/>
<dbReference type="HOGENOM" id="CLU_075666_2_1_1"/>
<dbReference type="InParanoid" id="Q5R893"/>
<dbReference type="OMA" id="RLLLPGX"/>
<dbReference type="OrthoDB" id="1733721at2759"/>
<dbReference type="TreeFam" id="TF300212"/>
<dbReference type="Proteomes" id="UP000001595">
    <property type="component" value="Chromosome 6"/>
</dbReference>
<dbReference type="GO" id="GO:0000786">
    <property type="term" value="C:nucleosome"/>
    <property type="evidence" value="ECO:0007669"/>
    <property type="project" value="UniProtKB-KW"/>
</dbReference>
<dbReference type="GO" id="GO:0005634">
    <property type="term" value="C:nucleus"/>
    <property type="evidence" value="ECO:0007669"/>
    <property type="project" value="UniProtKB-SubCell"/>
</dbReference>
<dbReference type="GO" id="GO:0003677">
    <property type="term" value="F:DNA binding"/>
    <property type="evidence" value="ECO:0007669"/>
    <property type="project" value="UniProtKB-KW"/>
</dbReference>
<dbReference type="GO" id="GO:0046982">
    <property type="term" value="F:protein heterodimerization activity"/>
    <property type="evidence" value="ECO:0007669"/>
    <property type="project" value="InterPro"/>
</dbReference>
<dbReference type="GO" id="GO:0030527">
    <property type="term" value="F:structural constituent of chromatin"/>
    <property type="evidence" value="ECO:0007669"/>
    <property type="project" value="InterPro"/>
</dbReference>
<dbReference type="GO" id="GO:0042742">
    <property type="term" value="P:defense response to bacterium"/>
    <property type="evidence" value="ECO:0007669"/>
    <property type="project" value="UniProtKB-KW"/>
</dbReference>
<dbReference type="CDD" id="cd22910">
    <property type="entry name" value="HFD_H2B"/>
    <property type="match status" value="1"/>
</dbReference>
<dbReference type="FunFam" id="1.10.20.10:FF:000003">
    <property type="entry name" value="Histone H2B"/>
    <property type="match status" value="1"/>
</dbReference>
<dbReference type="Gene3D" id="1.10.20.10">
    <property type="entry name" value="Histone, subunit A"/>
    <property type="match status" value="1"/>
</dbReference>
<dbReference type="InterPro" id="IPR009072">
    <property type="entry name" value="Histone-fold"/>
</dbReference>
<dbReference type="InterPro" id="IPR007125">
    <property type="entry name" value="Histone_H2A/H2B/H3"/>
</dbReference>
<dbReference type="InterPro" id="IPR000558">
    <property type="entry name" value="Histone_H2B"/>
</dbReference>
<dbReference type="InterPro" id="IPR055333">
    <property type="entry name" value="HISTONE_H2B_site"/>
</dbReference>
<dbReference type="PANTHER" id="PTHR23428">
    <property type="entry name" value="HISTONE H2B"/>
    <property type="match status" value="1"/>
</dbReference>
<dbReference type="Pfam" id="PF00125">
    <property type="entry name" value="Histone"/>
    <property type="match status" value="1"/>
</dbReference>
<dbReference type="PRINTS" id="PR00621">
    <property type="entry name" value="HISTONEH2B"/>
</dbReference>
<dbReference type="SMART" id="SM00427">
    <property type="entry name" value="H2B"/>
    <property type="match status" value="1"/>
</dbReference>
<dbReference type="SUPFAM" id="SSF47113">
    <property type="entry name" value="Histone-fold"/>
    <property type="match status" value="1"/>
</dbReference>
<dbReference type="PROSITE" id="PS00357">
    <property type="entry name" value="HISTONE_H2B"/>
    <property type="match status" value="1"/>
</dbReference>
<proteinExistence type="evidence at transcript level"/>
<name>H2B1_PONAB</name>
<protein>
    <recommendedName>
        <fullName>Histone H2B type 1</fullName>
    </recommendedName>
</protein>
<comment type="function">
    <text>Core component of nucleosome. Nucleosomes wrap and compact DNA into chromatin, limiting DNA accessibility to the cellular machineries which require DNA as a template. Histones thereby play a central role in transcription regulation, DNA repair, DNA replication and chromosomal stability. DNA accessibility is regulated via a complex set of post-translational modifications of histones, also called histone code, and nucleosome remodeling.</text>
</comment>
<comment type="function">
    <text evidence="1">Has broad antibacterial activity. May contribute to the formation of the functional antimicrobial barrier of the colonic epithelium, and to the bactericidal activity of amniotic fluid (By similarity).</text>
</comment>
<comment type="subunit">
    <text>The nucleosome is a histone octamer containing two molecules each of H2A, H2B, H3 and H4 assembled in one H3-H4 heterotetramer and two H2A-H2B heterodimers. The octamer wraps approximately 147 bp of DNA.</text>
</comment>
<comment type="subcellular location">
    <subcellularLocation>
        <location>Nucleus</location>
    </subcellularLocation>
    <subcellularLocation>
        <location>Chromosome</location>
    </subcellularLocation>
</comment>
<comment type="PTM">
    <text evidence="3">Monoubiquitination at Lys-35 (H2BK34Ub) by the MSL1/MSL2 dimer is required for histone H3 'Lys-4' (H3K4me) and 'Lys-79' (H3K79me) methylation and transcription activation at specific gene loci, such as HOXA9 and MEIS1 loci. Similarly, monoubiquitination at Lys-121 (H2BK120Ub) by the RNF20/40 complex gives a specific tag for epigenetic transcriptional activation and is also prerequisite for histone H3 'Lys-4' and 'Lys-79' methylation. It also functions cooperatively with the FACT dimer to stimulate elongation by RNA polymerase II. H2BK120Ub also acts as a regulator of mRNA splicing: deubiquitination by USP49 is required for efficient cotranscriptional splicing of a large set of exons (By similarity).</text>
</comment>
<comment type="PTM">
    <text evidence="3 10">Phosphorylated on Ser-15 (H2BS14ph) by STK4/MST1 during apoptosis; which facilitates apoptotic chromatin condensation. Also phosphorylated on Ser-15 in response to DNA double strand breaks (DSBs), and in correlation with somatic hypermutation and immunoglobulin class-switch recombination. Phosphorylation at Ser-37 (H2BS36ph) by AMPK in response to stress promotes transcription (By similarity).</text>
</comment>
<comment type="PTM">
    <text evidence="3 11">ADP-ribosylated by PARP1 or PARP2 on Ser-7 (H2BS6ADPr) in response to DNA damage (By similarity). H2BS6ADPr promotes recruitment of CHD1L (By similarity). Mono-ADP-ribosylated on Glu-3 (H2BE2ADPr) by PARP3 in response to single-strand breaks (By similarity). Poly ADP-ribosylation on Glu-36 (H2BE35ADPr) by PARP1 regulates adipogenesis: it inhibits phosphorylation at Ser-37 (H2BS36ph), thereby blocking expression of pro-adipogenetic genes (By similarity).</text>
</comment>
<comment type="PTM">
    <text evidence="3">Crotonylation (Kcr) is specifically present in male germ cells and marks testis-specific genes in post-meiotic cells, including X-linked genes that escape sex chromosome inactivation in haploid cells. Crotonylation marks active promoters and enhancers and confers resistance to transcriptional repressors. It is also associated with post-meiotically activated genes on autosomes (By similarity).</text>
</comment>
<comment type="PTM">
    <text evidence="5">GlcNAcylation at Ser-113 promotes monoubiquitination of Lys-121. It fluctuates in response to extracellular glucose, and associates with transcribed genes (By similarity).</text>
</comment>
<comment type="PTM">
    <text evidence="3">Lactylated in macrophages by EP300/P300 by using lactoyl-CoA directly derived from endogenous or exogenous lactate, leading to stimulates gene transcription.</text>
</comment>
<comment type="similarity">
    <text evidence="14">Belongs to the histone H2B family.</text>
</comment>
<keyword id="KW-0007">Acetylation</keyword>
<keyword id="KW-0013">ADP-ribosylation</keyword>
<keyword id="KW-0044">Antibiotic</keyword>
<keyword id="KW-0929">Antimicrobial</keyword>
<keyword id="KW-0158">Chromosome</keyword>
<keyword id="KW-0238">DNA-binding</keyword>
<keyword id="KW-0325">Glycoprotein</keyword>
<keyword id="KW-0379">Hydroxylation</keyword>
<keyword id="KW-1017">Isopeptide bond</keyword>
<keyword id="KW-0488">Methylation</keyword>
<keyword id="KW-0544">Nucleosome core</keyword>
<keyword id="KW-0539">Nucleus</keyword>
<keyword id="KW-0597">Phosphoprotein</keyword>
<keyword id="KW-1185">Reference proteome</keyword>
<keyword id="KW-0832">Ubl conjugation</keyword>
<reference key="1">
    <citation type="submission" date="2004-11" db="EMBL/GenBank/DDBJ databases">
        <authorList>
            <consortium name="The German cDNA consortium"/>
        </authorList>
    </citation>
    <scope>NUCLEOTIDE SEQUENCE [LARGE SCALE MRNA]</scope>
    <source>
        <tissue>Kidney</tissue>
    </source>
</reference>
<sequence>MPEPAKSAPAPKKGSKKAVTKAQKKDGKKRKRSRKESYSVYVYKVLKQVHPDTGISSKAMGIMNSFVNDIFERIAGEASRLAHYNKRSTITSREIQTAVRLLLPGELAKHAVSEGTKAVTKYTSSK</sequence>
<evidence type="ECO:0000250" key="1"/>
<evidence type="ECO:0000250" key="2">
    <source>
        <dbReference type="UniProtKB" id="P23527"/>
    </source>
</evidence>
<evidence type="ECO:0000250" key="3">
    <source>
        <dbReference type="UniProtKB" id="P33778"/>
    </source>
</evidence>
<evidence type="ECO:0000250" key="4">
    <source>
        <dbReference type="UniProtKB" id="P58876"/>
    </source>
</evidence>
<evidence type="ECO:0000250" key="5">
    <source>
        <dbReference type="UniProtKB" id="P62807"/>
    </source>
</evidence>
<evidence type="ECO:0000250" key="6">
    <source>
        <dbReference type="UniProtKB" id="P62808"/>
    </source>
</evidence>
<evidence type="ECO:0000250" key="7">
    <source>
        <dbReference type="UniProtKB" id="Q00715"/>
    </source>
</evidence>
<evidence type="ECO:0000250" key="8">
    <source>
        <dbReference type="UniProtKB" id="Q00729"/>
    </source>
</evidence>
<evidence type="ECO:0000250" key="9">
    <source>
        <dbReference type="UniProtKB" id="Q5QNW6"/>
    </source>
</evidence>
<evidence type="ECO:0000250" key="10">
    <source>
        <dbReference type="UniProtKB" id="Q64475"/>
    </source>
</evidence>
<evidence type="ECO:0000250" key="11">
    <source>
        <dbReference type="UniProtKB" id="Q6ZWY9"/>
    </source>
</evidence>
<evidence type="ECO:0000250" key="12">
    <source>
        <dbReference type="UniProtKB" id="Q96A08"/>
    </source>
</evidence>
<evidence type="ECO:0000256" key="13">
    <source>
        <dbReference type="SAM" id="MobiDB-lite"/>
    </source>
</evidence>
<evidence type="ECO:0000305" key="14"/>